<keyword id="KW-0131">Cell cycle</keyword>
<keyword id="KW-0132">Cell division</keyword>
<keyword id="KW-0226">DNA condensation</keyword>
<keyword id="KW-0498">Mitosis</keyword>
<keyword id="KW-0539">Nucleus</keyword>
<keyword id="KW-0597">Phosphoprotein</keyword>
<keyword id="KW-1185">Reference proteome</keyword>
<feature type="chain" id="PRO_0000255943" description="Condensin-2 complex subunit G2">
    <location>
        <begin position="1"/>
        <end position="1138"/>
    </location>
</feature>
<feature type="repeat" description="HEAT">
    <location>
        <begin position="459"/>
        <end position="497"/>
    </location>
</feature>
<feature type="modified residue" description="Phosphoserine" evidence="2">
    <location>
        <position position="30"/>
    </location>
</feature>
<feature type="modified residue" description="Phosphothreonine" evidence="2">
    <location>
        <position position="1114"/>
    </location>
</feature>
<feature type="sequence conflict" description="In Ref. 3; AAR21588." evidence="4" ref="3">
    <original>S</original>
    <variation>P</variation>
    <location>
        <position position="589"/>
    </location>
</feature>
<feature type="sequence conflict" description="In Ref. 2; AAH76631." evidence="4" ref="2">
    <original>L</original>
    <variation>F</variation>
    <location>
        <position position="674"/>
    </location>
</feature>
<feature type="sequence conflict" description="In Ref. 3; AAR21588." evidence="4" ref="3">
    <original>D</original>
    <variation>G</variation>
    <location>
        <position position="723"/>
    </location>
</feature>
<feature type="sequence conflict" description="In Ref. 3; AAR21588." evidence="4" ref="3">
    <original>Y</original>
    <variation>C</variation>
    <location>
        <position position="758"/>
    </location>
</feature>
<feature type="sequence conflict" description="In Ref. 3; AAR21588." evidence="4" ref="3">
    <original>T</original>
    <variation>A</variation>
    <location>
        <position position="1101"/>
    </location>
</feature>
<evidence type="ECO:0000250" key="1"/>
<evidence type="ECO:0000250" key="2">
    <source>
        <dbReference type="UniProtKB" id="Q86XI2"/>
    </source>
</evidence>
<evidence type="ECO:0000269" key="3">
    <source>
    </source>
</evidence>
<evidence type="ECO:0000305" key="4"/>
<name>CNDG2_MOUSE</name>
<comment type="function">
    <text evidence="3">Regulatory subunit of the condensin-2 complex, a complex which establishes mitotic chromosome architecture and is involved in physical rigidity of the chromatid axis. Is required for early embryonic development and is essential for viability and expansion of the inner cell mass (ICM) of the implanting blastocyst.</text>
</comment>
<comment type="subunit">
    <text>Component of the condensin-2 complex, which contains the SMC2 and SMC4 heterodimer, and 3 non SMC subunits that probably regulate the complex: NCAPH2, NCAPD3 and NCAPG2.</text>
</comment>
<comment type="subcellular location">
    <subcellularLocation>
        <location evidence="1">Nucleus</location>
    </subcellularLocation>
</comment>
<comment type="tissue specificity">
    <text evidence="3">Expressed in spleen, lung and testis as well as in hematopoietic cell lines.</text>
</comment>
<comment type="developmental stage">
    <text evidence="3">Expressed from 7 dpc when yolk sac hematopoiesis is initiated. Between 12.5 dpc and 15.5 dpc restricted to the developing fetal liver and the site of definitive hematopoiesis. Detected in thymus at 15.5 dpc as well as the midbrain, forebrain and the olfactory epithelium.</text>
</comment>
<comment type="sequence caution" evidence="4">
    <conflict type="frameshift">
        <sequence resource="EMBL-CDS" id="AAH08539"/>
    </conflict>
</comment>
<reference key="1">
    <citation type="journal article" date="2009" name="PLoS Biol.">
        <title>Lineage-specific biology revealed by a finished genome assembly of the mouse.</title>
        <authorList>
            <person name="Church D.M."/>
            <person name="Goodstadt L."/>
            <person name="Hillier L.W."/>
            <person name="Zody M.C."/>
            <person name="Goldstein S."/>
            <person name="She X."/>
            <person name="Bult C.J."/>
            <person name="Agarwala R."/>
            <person name="Cherry J.L."/>
            <person name="DiCuccio M."/>
            <person name="Hlavina W."/>
            <person name="Kapustin Y."/>
            <person name="Meric P."/>
            <person name="Maglott D."/>
            <person name="Birtle Z."/>
            <person name="Marques A.C."/>
            <person name="Graves T."/>
            <person name="Zhou S."/>
            <person name="Teague B."/>
            <person name="Potamousis K."/>
            <person name="Churas C."/>
            <person name="Place M."/>
            <person name="Herschleb J."/>
            <person name="Runnheim R."/>
            <person name="Forrest D."/>
            <person name="Amos-Landgraf J."/>
            <person name="Schwartz D.C."/>
            <person name="Cheng Z."/>
            <person name="Lindblad-Toh K."/>
            <person name="Eichler E.E."/>
            <person name="Ponting C.P."/>
        </authorList>
    </citation>
    <scope>NUCLEOTIDE SEQUENCE [LARGE SCALE GENOMIC DNA]</scope>
    <source>
        <strain>C57BL/6J</strain>
    </source>
</reference>
<reference key="2">
    <citation type="journal article" date="2004" name="Genome Res.">
        <title>The status, quality, and expansion of the NIH full-length cDNA project: the Mammalian Gene Collection (MGC).</title>
        <authorList>
            <consortium name="The MGC Project Team"/>
        </authorList>
    </citation>
    <scope>NUCLEOTIDE SEQUENCE [LARGE SCALE MRNA]</scope>
    <source>
        <strain>C57BL/6J</strain>
        <strain>Czech II</strain>
        <tissue>Head</tissue>
        <tissue>Mammary gland</tissue>
    </source>
</reference>
<reference key="3">
    <citation type="journal article" date="2004" name="Mol. Cell. Biol.">
        <title>More than blood, a novel gene required for mammalian postimplantation development.</title>
        <authorList>
            <person name="Smith E.D."/>
            <person name="Xu Y."/>
            <person name="Tomson B.N."/>
            <person name="Leung C.G."/>
            <person name="Fujiwara Y."/>
            <person name="Orkin S.H."/>
            <person name="Crispino J.D."/>
        </authorList>
    </citation>
    <scope>NUCLEOTIDE SEQUENCE [MRNA] OF 207-1138</scope>
    <scope>FUNCTION</scope>
    <scope>TISSUE SPECIFICITY</scope>
    <scope>DEVELOPMENTAL STAGE</scope>
    <source>
        <strain>129/Sv</strain>
    </source>
</reference>
<reference key="4">
    <citation type="journal article" date="2010" name="Cell">
        <title>A tissue-specific atlas of mouse protein phosphorylation and expression.</title>
        <authorList>
            <person name="Huttlin E.L."/>
            <person name="Jedrychowski M.P."/>
            <person name="Elias J.E."/>
            <person name="Goswami T."/>
            <person name="Rad R."/>
            <person name="Beausoleil S.A."/>
            <person name="Villen J."/>
            <person name="Haas W."/>
            <person name="Sowa M.E."/>
            <person name="Gygi S.P."/>
        </authorList>
    </citation>
    <scope>IDENTIFICATION BY MASS SPECTROMETRY [LARGE SCALE ANALYSIS]</scope>
    <source>
        <tissue>Spleen</tissue>
        <tissue>Testis</tissue>
    </source>
</reference>
<gene>
    <name type="primary">Ncapg2</name>
    <name type="synonym">Luzp5</name>
    <name type="synonym">Mtb</name>
</gene>
<proteinExistence type="evidence at protein level"/>
<protein>
    <recommendedName>
        <fullName>Condensin-2 complex subunit G2</fullName>
    </recommendedName>
    <alternativeName>
        <fullName>Chromosome-associated protein G2</fullName>
        <shortName>CAP-G2</shortName>
    </alternativeName>
    <alternativeName>
        <fullName>Leucine zipper protein 5</fullName>
    </alternativeName>
    <alternativeName>
        <fullName>More than blood protein</fullName>
    </alternativeName>
    <alternativeName>
        <fullName>Non-SMC condensin II complex subunit G2</fullName>
    </alternativeName>
</protein>
<organism>
    <name type="scientific">Mus musculus</name>
    <name type="common">Mouse</name>
    <dbReference type="NCBI Taxonomy" id="10090"/>
    <lineage>
        <taxon>Eukaryota</taxon>
        <taxon>Metazoa</taxon>
        <taxon>Chordata</taxon>
        <taxon>Craniata</taxon>
        <taxon>Vertebrata</taxon>
        <taxon>Euteleostomi</taxon>
        <taxon>Mammalia</taxon>
        <taxon>Eutheria</taxon>
        <taxon>Euarchontoglires</taxon>
        <taxon>Glires</taxon>
        <taxon>Rodentia</taxon>
        <taxon>Myomorpha</taxon>
        <taxon>Muroidea</taxon>
        <taxon>Muridae</taxon>
        <taxon>Murinae</taxon>
        <taxon>Mus</taxon>
        <taxon>Mus</taxon>
    </lineage>
</organism>
<dbReference type="EMBL" id="AC160634">
    <property type="status" value="NOT_ANNOTATED_CDS"/>
    <property type="molecule type" value="Genomic_DNA"/>
</dbReference>
<dbReference type="EMBL" id="CT030173">
    <property type="status" value="NOT_ANNOTATED_CDS"/>
    <property type="molecule type" value="Genomic_DNA"/>
</dbReference>
<dbReference type="EMBL" id="BC008539">
    <property type="protein sequence ID" value="AAH08539.1"/>
    <property type="status" value="ALT_SEQ"/>
    <property type="molecule type" value="mRNA"/>
</dbReference>
<dbReference type="EMBL" id="BC076631">
    <property type="protein sequence ID" value="AAH76631.1"/>
    <property type="molecule type" value="mRNA"/>
</dbReference>
<dbReference type="EMBL" id="AY455829">
    <property type="protein sequence ID" value="AAR21588.1"/>
    <property type="molecule type" value="mRNA"/>
</dbReference>
<dbReference type="CCDS" id="CCDS26212.1"/>
<dbReference type="RefSeq" id="NP_598523.3">
    <property type="nucleotide sequence ID" value="NM_133762.3"/>
</dbReference>
<dbReference type="RefSeq" id="XP_006516412.1">
    <property type="nucleotide sequence ID" value="XM_006516349.3"/>
</dbReference>
<dbReference type="RefSeq" id="XP_006516413.1">
    <property type="nucleotide sequence ID" value="XM_006516350.5"/>
</dbReference>
<dbReference type="RefSeq" id="XP_006516414.1">
    <property type="nucleotide sequence ID" value="XM_006516351.5"/>
</dbReference>
<dbReference type="RefSeq" id="XP_006516415.1">
    <property type="nucleotide sequence ID" value="XM_006516352.5"/>
</dbReference>
<dbReference type="RefSeq" id="XP_006516416.1">
    <property type="nucleotide sequence ID" value="XM_006516353.4"/>
</dbReference>
<dbReference type="RefSeq" id="XP_006516417.1">
    <property type="nucleotide sequence ID" value="XM_006516354.5"/>
</dbReference>
<dbReference type="RefSeq" id="XP_036013545.1">
    <property type="nucleotide sequence ID" value="XM_036157652.1"/>
</dbReference>
<dbReference type="BioGRID" id="217926">
    <property type="interactions" value="24"/>
</dbReference>
<dbReference type="ComplexPortal" id="CPX-986">
    <property type="entry name" value="Condensin II complex"/>
</dbReference>
<dbReference type="FunCoup" id="Q6DFV1">
    <property type="interactions" value="3051"/>
</dbReference>
<dbReference type="IntAct" id="Q6DFV1">
    <property type="interactions" value="12"/>
</dbReference>
<dbReference type="STRING" id="10090.ENSMUSP00000081889"/>
<dbReference type="GlyGen" id="Q6DFV1">
    <property type="glycosylation" value="2 sites, 1 O-linked glycan (2 sites)"/>
</dbReference>
<dbReference type="iPTMnet" id="Q6DFV1"/>
<dbReference type="PhosphoSitePlus" id="Q6DFV1"/>
<dbReference type="jPOST" id="Q6DFV1"/>
<dbReference type="PaxDb" id="10090-ENSMUSP00000081889"/>
<dbReference type="PeptideAtlas" id="Q6DFV1"/>
<dbReference type="ProteomicsDB" id="283398"/>
<dbReference type="Pumba" id="Q6DFV1"/>
<dbReference type="Antibodypedia" id="10695">
    <property type="antibodies" value="140 antibodies from 22 providers"/>
</dbReference>
<dbReference type="DNASU" id="76044"/>
<dbReference type="Ensembl" id="ENSMUST00000084828.5">
    <property type="protein sequence ID" value="ENSMUSP00000081889.4"/>
    <property type="gene ID" value="ENSMUSG00000042029.8"/>
</dbReference>
<dbReference type="GeneID" id="76044"/>
<dbReference type="KEGG" id="mmu:76044"/>
<dbReference type="UCSC" id="uc007pht.1">
    <property type="organism name" value="mouse"/>
</dbReference>
<dbReference type="AGR" id="MGI:1923294"/>
<dbReference type="CTD" id="54892"/>
<dbReference type="MGI" id="MGI:1923294">
    <property type="gene designation" value="Ncapg2"/>
</dbReference>
<dbReference type="VEuPathDB" id="HostDB:ENSMUSG00000042029"/>
<dbReference type="eggNOG" id="KOG1949">
    <property type="taxonomic scope" value="Eukaryota"/>
</dbReference>
<dbReference type="GeneTree" id="ENSGT00490000043432"/>
<dbReference type="HOGENOM" id="CLU_008117_0_0_1"/>
<dbReference type="InParanoid" id="Q6DFV1"/>
<dbReference type="OMA" id="FMHHGVH"/>
<dbReference type="OrthoDB" id="10062843at2759"/>
<dbReference type="PhylomeDB" id="Q6DFV1"/>
<dbReference type="TreeFam" id="TF101163"/>
<dbReference type="Reactome" id="R-MMU-2299718">
    <property type="pathway name" value="Condensation of Prophase Chromosomes"/>
</dbReference>
<dbReference type="BioGRID-ORCS" id="76044">
    <property type="hits" value="21 hits in 81 CRISPR screens"/>
</dbReference>
<dbReference type="ChiTaRS" id="Ncapg2">
    <property type="organism name" value="mouse"/>
</dbReference>
<dbReference type="PRO" id="PR:Q6DFV1"/>
<dbReference type="Proteomes" id="UP000000589">
    <property type="component" value="Chromosome 12"/>
</dbReference>
<dbReference type="RNAct" id="Q6DFV1">
    <property type="molecule type" value="protein"/>
</dbReference>
<dbReference type="Bgee" id="ENSMUSG00000042029">
    <property type="expression patterns" value="Expressed in nasal cavity epithelium and 218 other cell types or tissues"/>
</dbReference>
<dbReference type="ExpressionAtlas" id="Q6DFV1">
    <property type="expression patterns" value="baseline and differential"/>
</dbReference>
<dbReference type="GO" id="GO:0000794">
    <property type="term" value="C:condensed nuclear chromosome"/>
    <property type="evidence" value="ECO:0000314"/>
    <property type="project" value="ComplexPortal"/>
</dbReference>
<dbReference type="GO" id="GO:0000796">
    <property type="term" value="C:condensin complex"/>
    <property type="evidence" value="ECO:0000314"/>
    <property type="project" value="MGI"/>
</dbReference>
<dbReference type="GO" id="GO:0016607">
    <property type="term" value="C:nuclear speck"/>
    <property type="evidence" value="ECO:0007669"/>
    <property type="project" value="Ensembl"/>
</dbReference>
<dbReference type="GO" id="GO:0005634">
    <property type="term" value="C:nucleus"/>
    <property type="evidence" value="ECO:0000314"/>
    <property type="project" value="MGI"/>
</dbReference>
<dbReference type="GO" id="GO:0043425">
    <property type="term" value="F:bHLH transcription factor binding"/>
    <property type="evidence" value="ECO:0000314"/>
    <property type="project" value="MGI"/>
</dbReference>
<dbReference type="GO" id="GO:0035064">
    <property type="term" value="F:methylated histone binding"/>
    <property type="evidence" value="ECO:0007669"/>
    <property type="project" value="Ensembl"/>
</dbReference>
<dbReference type="GO" id="GO:0051301">
    <property type="term" value="P:cell division"/>
    <property type="evidence" value="ECO:0007669"/>
    <property type="project" value="UniProtKB-KW"/>
</dbReference>
<dbReference type="GO" id="GO:0030261">
    <property type="term" value="P:chromosome condensation"/>
    <property type="evidence" value="ECO:0007669"/>
    <property type="project" value="UniProtKB-KW"/>
</dbReference>
<dbReference type="GO" id="GO:0030218">
    <property type="term" value="P:erythrocyte differentiation"/>
    <property type="evidence" value="ECO:0000314"/>
    <property type="project" value="MGI"/>
</dbReference>
<dbReference type="GO" id="GO:0001833">
    <property type="term" value="P:inner cell mass cell proliferation"/>
    <property type="evidence" value="ECO:0000315"/>
    <property type="project" value="MGI"/>
</dbReference>
<dbReference type="GO" id="GO:1905821">
    <property type="term" value="P:positive regulation of chromosome condensation"/>
    <property type="evidence" value="ECO:0000250"/>
    <property type="project" value="ComplexPortal"/>
</dbReference>
<dbReference type="GO" id="GO:0051984">
    <property type="term" value="P:positive regulation of chromosome segregation"/>
    <property type="evidence" value="ECO:0000315"/>
    <property type="project" value="ComplexPortal"/>
</dbReference>
<dbReference type="GO" id="GO:1905820">
    <property type="term" value="P:positive regulation of chromosome separation"/>
    <property type="evidence" value="ECO:0000315"/>
    <property type="project" value="ComplexPortal"/>
</dbReference>
<dbReference type="GO" id="GO:0006366">
    <property type="term" value="P:transcription by RNA polymerase II"/>
    <property type="evidence" value="ECO:0000314"/>
    <property type="project" value="MGI"/>
</dbReference>
<dbReference type="FunFam" id="1.25.10.10:FF:000238">
    <property type="entry name" value="Non-SMC condensin II complex subunit G2"/>
    <property type="match status" value="1"/>
</dbReference>
<dbReference type="Gene3D" id="1.25.10.10">
    <property type="entry name" value="Leucine-rich Repeat Variant"/>
    <property type="match status" value="1"/>
</dbReference>
<dbReference type="InterPro" id="IPR011989">
    <property type="entry name" value="ARM-like"/>
</dbReference>
<dbReference type="InterPro" id="IPR016024">
    <property type="entry name" value="ARM-type_fold"/>
</dbReference>
<dbReference type="InterPro" id="IPR024741">
    <property type="entry name" value="Condensin2_G2"/>
</dbReference>
<dbReference type="PANTHER" id="PTHR16199">
    <property type="entry name" value="CONDENSIN-2 COMPLEX SUBUNIT G2"/>
    <property type="match status" value="1"/>
</dbReference>
<dbReference type="PANTHER" id="PTHR16199:SF4">
    <property type="entry name" value="CONDENSIN-2 COMPLEX SUBUNIT G2"/>
    <property type="match status" value="1"/>
</dbReference>
<dbReference type="Pfam" id="PF12422">
    <property type="entry name" value="Condensin2nSMC"/>
    <property type="match status" value="1"/>
</dbReference>
<dbReference type="SUPFAM" id="SSF48371">
    <property type="entry name" value="ARM repeat"/>
    <property type="match status" value="1"/>
</dbReference>
<sequence>MEKREAFIQAVSKELVEEFLQFLQLDKDSSNPFSLSELLDELSRKQKEELWQRLKDLLTETLLESPVDRWQTVEVEGADDMESEHSPKMRKSIKIICAIVTVILASVSIINEHENYGALLECAVILNGILYALPESEQKLQNSIQDLCVKWWERGLPAKEDMGKTAFIMLLRRSLETKSGADVCRLWRIHQALYCFDYDWEESREIKDMLLECFINVNYIKKEEGRRFLSFLFSWNVDFIKMIHETIKNQLAGLQKSLMVHIAEIYFRAWKKASGKMLETIEYDCIQDFMFHGIHLLRRSPVHSKVREVLSYFHQQKVRQGVEEMLYRLYKPILWRGLKARNSEVRSNAALLFVEAFPIRDPNFTATEMDNEIQKQFEELYNLIEDPYPRVRSTGILGVCKISSKYWEMMPPNILVDFLKKVTGELAFDISSADVRCSVFKCLPIILDNKLSHPLLEQLLPTLRYSLHDNSEKVRVAFVDLLLKIKAVRAAKFWKICPMEDILVRLEMDSRPVSRRLVSLIFNSFLPVNQPEEVWCERCVTLIQMNRAAARRFYQYAHEHTASTNIAKLIHVIRHCLNACIQRTLREGSEAHKECEKENASVLDKTLSVNDTASMAGLLEIIVILWKNIHRSLENNKEAKIYTINKFAAVLPEYLKVFKDERCKIPLFMLMSFLPASAVPVFSCGVISVLRNQESVTGRSYCTLLDCLCSWGQVGHVLELIVDWLPTVPPQAKSNLASKRKVEINDTCSVKPELALLYMEYLLTHPKNRECLLSVPQKKLNQLLKALEGSKAELESFLQSPSGNPLNFNKATALHAFGLYCRMSVHLQYKFCSEEKIHLSILDDTGSWLENKVLPLLEDQEEEYLKLRKDVYQQIIQTYLAVCKDVVMVGLGDPKFQMQLLQRSFGIMKTVKGFFYVSLLLGILKEIAGNTIIHKTDSDEKVTVLFDLVQEVFQKMLECIACIFRKQPEESLPLFHSVQTPLHEFITTIQSWHKDTAVHHAVLSTLIAAPVVEISHQLQKVSDIEELTSPQCLHDLPPFSRCLVGVIMKSSDVVRSFVDELKACVTSGDVEGIVCLTAVLHIILVINKGKHISAKVKEVATAVYRKLKTFMEITLEEDSLERFLYESSMRTLGEFLNP</sequence>
<accession>Q6DFV1</accession>
<accession>E9QP71</accession>
<accession>Q6SLL0</accession>
<accession>Q922D1</accession>